<name>PNSL3_ARATH</name>
<evidence type="ECO:0000250" key="1"/>
<evidence type="ECO:0000255" key="2"/>
<evidence type="ECO:0000269" key="3">
    <source>
    </source>
</evidence>
<evidence type="ECO:0000269" key="4">
    <source>
    </source>
</evidence>
<evidence type="ECO:0000269" key="5">
    <source>
    </source>
</evidence>
<evidence type="ECO:0000269" key="6">
    <source>
    </source>
</evidence>
<evidence type="ECO:0000303" key="7">
    <source>
    </source>
</evidence>
<evidence type="ECO:0000305" key="8"/>
<evidence type="ECO:0000312" key="9">
    <source>
        <dbReference type="Araport" id="AT3G01440"/>
    </source>
</evidence>
<evidence type="ECO:0000312" key="10">
    <source>
        <dbReference type="EMBL" id="AAF24614.1"/>
    </source>
</evidence>
<sequence length="220" mass="24781">MAHFIDLNSLTNTLPSLPKLPESRKTGKSSGFACRRTEEFQEPDSVQITRRMTLGFAVSIGLTGILGENNVSLAQDNGFWIDGPLPIPPIYNNIVNEKTGTRTFIKKGVYVADIGTKGRMYRVKKNAFDLLAMEDLIGPDTLNYVKKYLRLKSTFLFYDFDNLISAAASEDKQPLTDLANRLFDNFEKLEDAAKTKNLAETESCYKDTKFLLQEVMTRMA</sequence>
<gene>
    <name evidence="7" type="primary">PNSL3</name>
    <name type="synonym">PQL1</name>
    <name type="synonym">PQL2</name>
    <name evidence="9" type="ordered locus">At3g01440</name>
    <name evidence="10" type="ORF">T13O15.8</name>
</gene>
<accession>Q9SGH4</accession>
<accession>Q8LEW8</accession>
<feature type="transit peptide" description="Chloroplast" evidence="2">
    <location>
        <begin position="1"/>
        <end position="35"/>
    </location>
</feature>
<feature type="transit peptide" description="Thylakoid" evidence="1">
    <location>
        <begin position="36"/>
        <end position="77"/>
    </location>
</feature>
<feature type="chain" id="PRO_0000419236" description="Photosynthetic NDH subunit of lumenal location 3, chloroplastic">
    <location>
        <begin position="78"/>
        <end position="220"/>
    </location>
</feature>
<feature type="sequence conflict" description="In Ref. 4; AAM61735." evidence="8" ref="4">
    <original>R</original>
    <variation>K</variation>
    <location>
        <position position="181"/>
    </location>
</feature>
<keyword id="KW-0002">3D-structure</keyword>
<keyword id="KW-0150">Chloroplast</keyword>
<keyword id="KW-0903">Direct protein sequencing</keyword>
<keyword id="KW-0472">Membrane</keyword>
<keyword id="KW-0934">Plastid</keyword>
<keyword id="KW-1185">Reference proteome</keyword>
<keyword id="KW-0793">Thylakoid</keyword>
<keyword id="KW-0809">Transit peptide</keyword>
<keyword id="KW-0813">Transport</keyword>
<reference key="1">
    <citation type="journal article" date="2000" name="Nature">
        <title>Sequence and analysis of chromosome 3 of the plant Arabidopsis thaliana.</title>
        <authorList>
            <person name="Salanoubat M."/>
            <person name="Lemcke K."/>
            <person name="Rieger M."/>
            <person name="Ansorge W."/>
            <person name="Unseld M."/>
            <person name="Fartmann B."/>
            <person name="Valle G."/>
            <person name="Bloecker H."/>
            <person name="Perez-Alonso M."/>
            <person name="Obermaier B."/>
            <person name="Delseny M."/>
            <person name="Boutry M."/>
            <person name="Grivell L.A."/>
            <person name="Mache R."/>
            <person name="Puigdomenech P."/>
            <person name="De Simone V."/>
            <person name="Choisne N."/>
            <person name="Artiguenave F."/>
            <person name="Robert C."/>
            <person name="Brottier P."/>
            <person name="Wincker P."/>
            <person name="Cattolico L."/>
            <person name="Weissenbach J."/>
            <person name="Saurin W."/>
            <person name="Quetier F."/>
            <person name="Schaefer M."/>
            <person name="Mueller-Auer S."/>
            <person name="Gabel C."/>
            <person name="Fuchs M."/>
            <person name="Benes V."/>
            <person name="Wurmbach E."/>
            <person name="Drzonek H."/>
            <person name="Erfle H."/>
            <person name="Jordan N."/>
            <person name="Bangert S."/>
            <person name="Wiedelmann R."/>
            <person name="Kranz H."/>
            <person name="Voss H."/>
            <person name="Holland R."/>
            <person name="Brandt P."/>
            <person name="Nyakatura G."/>
            <person name="Vezzi A."/>
            <person name="D'Angelo M."/>
            <person name="Pallavicini A."/>
            <person name="Toppo S."/>
            <person name="Simionati B."/>
            <person name="Conrad A."/>
            <person name="Hornischer K."/>
            <person name="Kauer G."/>
            <person name="Loehnert T.-H."/>
            <person name="Nordsiek G."/>
            <person name="Reichelt J."/>
            <person name="Scharfe M."/>
            <person name="Schoen O."/>
            <person name="Bargues M."/>
            <person name="Terol J."/>
            <person name="Climent J."/>
            <person name="Navarro P."/>
            <person name="Collado C."/>
            <person name="Perez-Perez A."/>
            <person name="Ottenwaelder B."/>
            <person name="Duchemin D."/>
            <person name="Cooke R."/>
            <person name="Laudie M."/>
            <person name="Berger-Llauro C."/>
            <person name="Purnelle B."/>
            <person name="Masuy D."/>
            <person name="de Haan M."/>
            <person name="Maarse A.C."/>
            <person name="Alcaraz J.-P."/>
            <person name="Cottet A."/>
            <person name="Casacuberta E."/>
            <person name="Monfort A."/>
            <person name="Argiriou A."/>
            <person name="Flores M."/>
            <person name="Liguori R."/>
            <person name="Vitale D."/>
            <person name="Mannhaupt G."/>
            <person name="Haase D."/>
            <person name="Schoof H."/>
            <person name="Rudd S."/>
            <person name="Zaccaria P."/>
            <person name="Mewes H.-W."/>
            <person name="Mayer K.F.X."/>
            <person name="Kaul S."/>
            <person name="Town C.D."/>
            <person name="Koo H.L."/>
            <person name="Tallon L.J."/>
            <person name="Jenkins J."/>
            <person name="Rooney T."/>
            <person name="Rizzo M."/>
            <person name="Walts A."/>
            <person name="Utterback T."/>
            <person name="Fujii C.Y."/>
            <person name="Shea T.P."/>
            <person name="Creasy T.H."/>
            <person name="Haas B."/>
            <person name="Maiti R."/>
            <person name="Wu D."/>
            <person name="Peterson J."/>
            <person name="Van Aken S."/>
            <person name="Pai G."/>
            <person name="Militscher J."/>
            <person name="Sellers P."/>
            <person name="Gill J.E."/>
            <person name="Feldblyum T.V."/>
            <person name="Preuss D."/>
            <person name="Lin X."/>
            <person name="Nierman W.C."/>
            <person name="Salzberg S.L."/>
            <person name="White O."/>
            <person name="Venter J.C."/>
            <person name="Fraser C.M."/>
            <person name="Kaneko T."/>
            <person name="Nakamura Y."/>
            <person name="Sato S."/>
            <person name="Kato T."/>
            <person name="Asamizu E."/>
            <person name="Sasamoto S."/>
            <person name="Kimura T."/>
            <person name="Idesawa K."/>
            <person name="Kawashima K."/>
            <person name="Kishida Y."/>
            <person name="Kiyokawa C."/>
            <person name="Kohara M."/>
            <person name="Matsumoto M."/>
            <person name="Matsuno A."/>
            <person name="Muraki A."/>
            <person name="Nakayama S."/>
            <person name="Nakazaki N."/>
            <person name="Shinpo S."/>
            <person name="Takeuchi C."/>
            <person name="Wada T."/>
            <person name="Watanabe A."/>
            <person name="Yamada M."/>
            <person name="Yasuda M."/>
            <person name="Tabata S."/>
        </authorList>
    </citation>
    <scope>NUCLEOTIDE SEQUENCE [LARGE SCALE GENOMIC DNA]</scope>
    <source>
        <strain>cv. Columbia</strain>
    </source>
</reference>
<reference key="2">
    <citation type="journal article" date="2017" name="Plant J.">
        <title>Araport11: a complete reannotation of the Arabidopsis thaliana reference genome.</title>
        <authorList>
            <person name="Cheng C.Y."/>
            <person name="Krishnakumar V."/>
            <person name="Chan A.P."/>
            <person name="Thibaud-Nissen F."/>
            <person name="Schobel S."/>
            <person name="Town C.D."/>
        </authorList>
    </citation>
    <scope>GENOME REANNOTATION</scope>
    <source>
        <strain>cv. Columbia</strain>
    </source>
</reference>
<reference key="3">
    <citation type="journal article" date="2003" name="Science">
        <title>Empirical analysis of transcriptional activity in the Arabidopsis genome.</title>
        <authorList>
            <person name="Yamada K."/>
            <person name="Lim J."/>
            <person name="Dale J.M."/>
            <person name="Chen H."/>
            <person name="Shinn P."/>
            <person name="Palm C.J."/>
            <person name="Southwick A.M."/>
            <person name="Wu H.C."/>
            <person name="Kim C.J."/>
            <person name="Nguyen M."/>
            <person name="Pham P.K."/>
            <person name="Cheuk R.F."/>
            <person name="Karlin-Newmann G."/>
            <person name="Liu S.X."/>
            <person name="Lam B."/>
            <person name="Sakano H."/>
            <person name="Wu T."/>
            <person name="Yu G."/>
            <person name="Miranda M."/>
            <person name="Quach H.L."/>
            <person name="Tripp M."/>
            <person name="Chang C.H."/>
            <person name="Lee J.M."/>
            <person name="Toriumi M.J."/>
            <person name="Chan M.M."/>
            <person name="Tang C.C."/>
            <person name="Onodera C.S."/>
            <person name="Deng J.M."/>
            <person name="Akiyama K."/>
            <person name="Ansari Y."/>
            <person name="Arakawa T."/>
            <person name="Banh J."/>
            <person name="Banno F."/>
            <person name="Bowser L."/>
            <person name="Brooks S.Y."/>
            <person name="Carninci P."/>
            <person name="Chao Q."/>
            <person name="Choy N."/>
            <person name="Enju A."/>
            <person name="Goldsmith A.D."/>
            <person name="Gurjal M."/>
            <person name="Hansen N.F."/>
            <person name="Hayashizaki Y."/>
            <person name="Johnson-Hopson C."/>
            <person name="Hsuan V.W."/>
            <person name="Iida K."/>
            <person name="Karnes M."/>
            <person name="Khan S."/>
            <person name="Koesema E."/>
            <person name="Ishida J."/>
            <person name="Jiang P.X."/>
            <person name="Jones T."/>
            <person name="Kawai J."/>
            <person name="Kamiya A."/>
            <person name="Meyers C."/>
            <person name="Nakajima M."/>
            <person name="Narusaka M."/>
            <person name="Seki M."/>
            <person name="Sakurai T."/>
            <person name="Satou M."/>
            <person name="Tamse R."/>
            <person name="Vaysberg M."/>
            <person name="Wallender E.K."/>
            <person name="Wong C."/>
            <person name="Yamamura Y."/>
            <person name="Yuan S."/>
            <person name="Shinozaki K."/>
            <person name="Davis R.W."/>
            <person name="Theologis A."/>
            <person name="Ecker J.R."/>
        </authorList>
    </citation>
    <scope>NUCLEOTIDE SEQUENCE [LARGE SCALE MRNA]</scope>
    <source>
        <strain>cv. Columbia</strain>
    </source>
</reference>
<reference key="4">
    <citation type="submission" date="2002-03" db="EMBL/GenBank/DDBJ databases">
        <title>Full-length cDNA from Arabidopsis thaliana.</title>
        <authorList>
            <person name="Brover V.V."/>
            <person name="Troukhan M.E."/>
            <person name="Alexandrov N.A."/>
            <person name="Lu Y.-P."/>
            <person name="Flavell R.B."/>
            <person name="Feldmann K.A."/>
        </authorList>
    </citation>
    <scope>NUCLEOTIDE SEQUENCE [LARGE SCALE MRNA]</scope>
</reference>
<reference key="5">
    <citation type="journal article" date="2008" name="PLoS ONE">
        <title>Sorting signals, N-terminal modifications and abundance of the chloroplast proteome.</title>
        <authorList>
            <person name="Zybailov B."/>
            <person name="Rutschow H."/>
            <person name="Friso G."/>
            <person name="Rudella A."/>
            <person name="Emanuelsson O."/>
            <person name="Sun Q."/>
            <person name="van Wijk K.J."/>
        </authorList>
    </citation>
    <scope>PROTEIN SEQUENCE OF 126-146</scope>
    <scope>IDENTIFICATION BY MASS SPECTROMETRY</scope>
    <scope>SUBCELLULAR LOCATION [LARGE SCALE ANALYSIS]</scope>
</reference>
<reference key="6">
    <citation type="journal article" date="2009" name="Mol. Plant">
        <title>Towards characterization of the chloroplast NAD(P)H dehydrogenase complex.</title>
        <authorList>
            <person name="Suorsa M."/>
            <person name="Sirpioe S."/>
            <person name="Aro E.M."/>
        </authorList>
    </citation>
    <scope>REVIEW</scope>
</reference>
<reference key="7">
    <citation type="journal article" date="2010" name="Plant Cell Physiol.">
        <title>Three PsbQ-like proteins are required for the function of the chloroplast NAD(P)H dehydrogenase complex in Arabidopsis.</title>
        <authorList>
            <person name="Yabuta S."/>
            <person name="Ifuku K."/>
            <person name="Takabayashi A."/>
            <person name="Ishihara S."/>
            <person name="Ido K."/>
            <person name="Ishikawa N."/>
            <person name="Endo T."/>
            <person name="Sato F."/>
        </authorList>
    </citation>
    <scope>FUNCTION</scope>
    <scope>DISRUPTION PHENOTYPE</scope>
    <scope>NOMENCLATURE</scope>
    <scope>SUBUNIT</scope>
    <source>
        <strain>cv. Columbia</strain>
    </source>
</reference>
<reference key="8">
    <citation type="journal article" date="2010" name="Plant Cell Physiol.">
        <title>Two proteins homologous to PsbQ are novel subunits of the chloroplast NAD(P)H dehydrogenase.</title>
        <authorList>
            <person name="Suorsa M."/>
            <person name="Sirpioe S."/>
            <person name="Paakkarinen V."/>
            <person name="Kumari N."/>
            <person name="Holmstroem M."/>
            <person name="Aro E.-M."/>
        </authorList>
    </citation>
    <scope>FUNCTION</scope>
    <scope>DISRUPTION PHENOTYPE</scope>
    <scope>SUBUNIT</scope>
    <scope>SUBCELLULAR LOCATION</scope>
</reference>
<reference key="9">
    <citation type="journal article" date="2011" name="Biochim. Biophys. Acta">
        <title>Structure and biogenesis of the chloroplast NAD(P)H dehydrogenase complex.</title>
        <authorList>
            <person name="Peng L."/>
            <person name="Yamamoto H."/>
            <person name="Shikanai T."/>
        </authorList>
    </citation>
    <scope>REVIEW</scope>
</reference>
<reference key="10">
    <citation type="journal article" date="2011" name="Plant Cell Physiol.">
        <title>Structure of the chloroplast NADH dehydrogenase-like complex: nomenclature for nuclear-encoded subunits.</title>
        <authorList>
            <person name="Ifuku K."/>
            <person name="Endo T."/>
            <person name="Shikanai T."/>
            <person name="Aro E.M."/>
        </authorList>
    </citation>
    <scope>NOMENCLATURE</scope>
    <scope>COMPONENT OF THE NDH COMPLEX</scope>
</reference>
<proteinExistence type="evidence at protein level"/>
<organism>
    <name type="scientific">Arabidopsis thaliana</name>
    <name type="common">Mouse-ear cress</name>
    <dbReference type="NCBI Taxonomy" id="3702"/>
    <lineage>
        <taxon>Eukaryota</taxon>
        <taxon>Viridiplantae</taxon>
        <taxon>Streptophyta</taxon>
        <taxon>Embryophyta</taxon>
        <taxon>Tracheophyta</taxon>
        <taxon>Spermatophyta</taxon>
        <taxon>Magnoliopsida</taxon>
        <taxon>eudicotyledons</taxon>
        <taxon>Gunneridae</taxon>
        <taxon>Pentapetalae</taxon>
        <taxon>rosids</taxon>
        <taxon>malvids</taxon>
        <taxon>Brassicales</taxon>
        <taxon>Brassicaceae</taxon>
        <taxon>Camelineae</taxon>
        <taxon>Arabidopsis</taxon>
    </lineage>
</organism>
<comment type="function">
    <text evidence="4 5 8">NDH shuttles electrons from NAD(P)H:plastoquinone, via FMN and iron-sulfur (Fe-S) centers, to quinones in the photosynthetic chain and possibly in a chloroplast respiratory chain. The immediate electron acceptor for the enzyme in this species is believed to be plastoquinone. Couples the redox reaction to proton translocation, and thus conserves the redox energy in a proton gradient (Probable). Required for both formation and activity of the chloroplast NAD(P)H dehydrogenase (NDH) complex (PubMed:20430763, PubMed:20460499).</text>
</comment>
<comment type="subunit">
    <text evidence="4 5 6">Part of the chloroplast NDH complex, composed of a mixture of chloroplast and nucleus encoded subunits. Component of the NDH lumenal subcomplex, at least composed of PnsL1, PnsL2, PnsL3, PnsL4 and PnsL5.</text>
</comment>
<comment type="subcellular location">
    <subcellularLocation>
        <location evidence="3 5">Plastid</location>
        <location evidence="3 5">Chloroplast thylakoid membrane</location>
        <topology evidence="3 5">Peripheral membrane protein</topology>
        <orientation evidence="3 5">Lumenal side</orientation>
    </subcellularLocation>
    <text>Associated with the chloroplast NAD(P)H dehydrogenase/photosystem I (NDH/PSI) supercomplex.</text>
</comment>
<comment type="disruption phenotype">
    <text evidence="4 5">Impaired chloroplastic NAD(P)H dehydrogenase (NDH) activity leading to the loss of post-illumination increases in Chl fluorescence, probably due to a reduced stability of the NDH complex.</text>
</comment>
<comment type="similarity">
    <text evidence="8">Belongs to the PsbQ family.</text>
</comment>
<dbReference type="EMBL" id="AC010870">
    <property type="protein sequence ID" value="AAF24614.1"/>
    <property type="molecule type" value="Genomic_DNA"/>
</dbReference>
<dbReference type="EMBL" id="CP002686">
    <property type="protein sequence ID" value="AEE73667.1"/>
    <property type="molecule type" value="Genomic_DNA"/>
</dbReference>
<dbReference type="EMBL" id="AY070745">
    <property type="protein sequence ID" value="AAL50085.1"/>
    <property type="molecule type" value="mRNA"/>
</dbReference>
<dbReference type="EMBL" id="AY093737">
    <property type="protein sequence ID" value="AAM10361.1"/>
    <property type="molecule type" value="mRNA"/>
</dbReference>
<dbReference type="EMBL" id="AY085184">
    <property type="protein sequence ID" value="AAM61735.1"/>
    <property type="molecule type" value="mRNA"/>
</dbReference>
<dbReference type="RefSeq" id="NP_566137.1">
    <property type="nucleotide sequence ID" value="NM_111010.3"/>
</dbReference>
<dbReference type="PDB" id="7WFF">
    <property type="method" value="EM"/>
    <property type="resolution" value="3.59 A"/>
    <property type="chains" value="h=1-220"/>
</dbReference>
<dbReference type="PDB" id="7WG5">
    <property type="method" value="EM"/>
    <property type="resolution" value="3.89 A"/>
    <property type="chains" value="h=1-220"/>
</dbReference>
<dbReference type="PDBsum" id="7WFF"/>
<dbReference type="PDBsum" id="7WG5"/>
<dbReference type="EMDB" id="EMD-32464"/>
<dbReference type="EMDB" id="EMD-32477"/>
<dbReference type="SMR" id="Q9SGH4"/>
<dbReference type="BioGRID" id="6476">
    <property type="interactions" value="5"/>
</dbReference>
<dbReference type="FunCoup" id="Q9SGH4">
    <property type="interactions" value="922"/>
</dbReference>
<dbReference type="IntAct" id="Q9SGH4">
    <property type="interactions" value="3"/>
</dbReference>
<dbReference type="STRING" id="3702.Q9SGH4"/>
<dbReference type="TCDB" id="3.D.1.8.1">
    <property type="family name" value="the h+ or na+-translocating nadh dehydrogenase (ndh) family"/>
</dbReference>
<dbReference type="PaxDb" id="3702-AT3G01440.1"/>
<dbReference type="ProteomicsDB" id="234790"/>
<dbReference type="EnsemblPlants" id="AT3G01440.1">
    <property type="protein sequence ID" value="AT3G01440.1"/>
    <property type="gene ID" value="AT3G01440"/>
</dbReference>
<dbReference type="GeneID" id="821143"/>
<dbReference type="Gramene" id="AT3G01440.1">
    <property type="protein sequence ID" value="AT3G01440.1"/>
    <property type="gene ID" value="AT3G01440"/>
</dbReference>
<dbReference type="KEGG" id="ath:AT3G01440"/>
<dbReference type="Araport" id="AT3G01440"/>
<dbReference type="TAIR" id="AT3G01440">
    <property type="gene designation" value="PNSL3"/>
</dbReference>
<dbReference type="eggNOG" id="ENOG502QVCH">
    <property type="taxonomic scope" value="Eukaryota"/>
</dbReference>
<dbReference type="HOGENOM" id="CLU_104804_0_0_1"/>
<dbReference type="InParanoid" id="Q9SGH4"/>
<dbReference type="OMA" id="QSCYQET"/>
<dbReference type="PhylomeDB" id="Q9SGH4"/>
<dbReference type="PRO" id="PR:Q9SGH4"/>
<dbReference type="Proteomes" id="UP000006548">
    <property type="component" value="Chromosome 3"/>
</dbReference>
<dbReference type="ExpressionAtlas" id="Q9SGH4">
    <property type="expression patterns" value="baseline and differential"/>
</dbReference>
<dbReference type="GO" id="GO:0009507">
    <property type="term" value="C:chloroplast"/>
    <property type="evidence" value="ECO:0007005"/>
    <property type="project" value="TAIR"/>
</dbReference>
<dbReference type="GO" id="GO:0009534">
    <property type="term" value="C:chloroplast thylakoid"/>
    <property type="evidence" value="ECO:0000314"/>
    <property type="project" value="TAIR"/>
</dbReference>
<dbReference type="GO" id="GO:0009535">
    <property type="term" value="C:chloroplast thylakoid membrane"/>
    <property type="evidence" value="ECO:0007005"/>
    <property type="project" value="TAIR"/>
</dbReference>
<dbReference type="GO" id="GO:0005829">
    <property type="term" value="C:cytosol"/>
    <property type="evidence" value="ECO:0007005"/>
    <property type="project" value="TAIR"/>
</dbReference>
<dbReference type="GO" id="GO:0019898">
    <property type="term" value="C:extrinsic component of membrane"/>
    <property type="evidence" value="ECO:0007669"/>
    <property type="project" value="InterPro"/>
</dbReference>
<dbReference type="GO" id="GO:0009344">
    <property type="term" value="C:nitrite reductase complex [NAD(P)H]"/>
    <property type="evidence" value="ECO:0000315"/>
    <property type="project" value="TAIR"/>
</dbReference>
<dbReference type="GO" id="GO:0009654">
    <property type="term" value="C:photosystem II oxygen evolving complex"/>
    <property type="evidence" value="ECO:0000304"/>
    <property type="project" value="TAIR"/>
</dbReference>
<dbReference type="GO" id="GO:0005509">
    <property type="term" value="F:calcium ion binding"/>
    <property type="evidence" value="ECO:0007669"/>
    <property type="project" value="InterPro"/>
</dbReference>
<dbReference type="GO" id="GO:0045156">
    <property type="term" value="F:electron transporter, transferring electrons within the cyclic electron transport pathway of photosynthesis activity"/>
    <property type="evidence" value="ECO:0000315"/>
    <property type="project" value="TAIR"/>
</dbReference>
<dbReference type="GO" id="GO:0019684">
    <property type="term" value="P:photosynthesis, light reaction"/>
    <property type="evidence" value="ECO:0000304"/>
    <property type="project" value="TAIR"/>
</dbReference>
<dbReference type="GO" id="GO:0009767">
    <property type="term" value="P:photosynthetic electron transport chain"/>
    <property type="evidence" value="ECO:0000315"/>
    <property type="project" value="TAIR"/>
</dbReference>
<dbReference type="FunFam" id="1.20.120.290:FF:000003">
    <property type="entry name" value="Photosynthetic NDH subunit of lumenal location 3, chloroplastic"/>
    <property type="match status" value="1"/>
</dbReference>
<dbReference type="Gene3D" id="1.20.120.290">
    <property type="entry name" value="Oxygen-evolving enhancer protein 3 (PsbQ), four-helix up-down bundle"/>
    <property type="match status" value="1"/>
</dbReference>
<dbReference type="InterPro" id="IPR023222">
    <property type="entry name" value="PsbQ-like_dom_sf"/>
</dbReference>
<dbReference type="InterPro" id="IPR008797">
    <property type="entry name" value="PSII_PsbQ"/>
</dbReference>
<dbReference type="InterPro" id="IPR054099">
    <property type="entry name" value="PSII_PsbQ_pln"/>
</dbReference>
<dbReference type="PANTHER" id="PTHR33399">
    <property type="entry name" value="OXYGEN-EVOLVING ENHANCER PROTEIN 3-1, CHLOROPLASTIC"/>
    <property type="match status" value="1"/>
</dbReference>
<dbReference type="PANTHER" id="PTHR33399:SF2">
    <property type="entry name" value="PHOTOSYNTHETIC NDH SUBUNIT OF LUMENAL LOCATION 3, CHLOROPLASTIC"/>
    <property type="match status" value="1"/>
</dbReference>
<dbReference type="Pfam" id="PF05757">
    <property type="entry name" value="PsbQ"/>
    <property type="match status" value="1"/>
</dbReference>
<dbReference type="SUPFAM" id="SSF101112">
    <property type="entry name" value="Oxygen-evolving enhancer protein 3"/>
    <property type="match status" value="1"/>
</dbReference>
<protein>
    <recommendedName>
        <fullName evidence="7">Photosynthetic NDH subunit of lumenal location 3, chloroplastic</fullName>
    </recommendedName>
    <alternativeName>
        <fullName>PsbQ-like protein 2</fullName>
    </alternativeName>
</protein>